<name>DFB39_RAT</name>
<gene>
    <name type="primary">Defb39</name>
</gene>
<comment type="function">
    <text evidence="1">Has antibacterial activity.</text>
</comment>
<comment type="subcellular location">
    <subcellularLocation>
        <location evidence="1">Secreted</location>
    </subcellularLocation>
</comment>
<comment type="similarity">
    <text evidence="3">Belongs to the beta-defensin family.</text>
</comment>
<proteinExistence type="inferred from homology"/>
<reference key="1">
    <citation type="journal article" date="2005" name="Physiol. Genomics">
        <title>Cross-species analysis of the mammalian beta-defensin gene family: presence of syntenic gene clusters and preferential expression in the male reproductive tract.</title>
        <authorList>
            <person name="Patil A.A."/>
            <person name="Cai Y."/>
            <person name="Sang Y."/>
            <person name="Blecha F."/>
            <person name="Zhang G."/>
        </authorList>
    </citation>
    <scope>NUCLEOTIDE SEQUENCE [MRNA]</scope>
</reference>
<feature type="signal peptide" evidence="2">
    <location>
        <begin position="1"/>
        <end position="23"/>
    </location>
</feature>
<feature type="chain" id="PRO_0000352715" description="Beta-defensin 39">
    <location>
        <begin position="24"/>
        <end position="73"/>
    </location>
</feature>
<feature type="disulfide bond" evidence="1">
    <location>
        <begin position="29"/>
        <end position="58"/>
    </location>
</feature>
<feature type="disulfide bond" evidence="1">
    <location>
        <begin position="36"/>
        <end position="51"/>
    </location>
</feature>
<feature type="disulfide bond" evidence="1">
    <location>
        <begin position="41"/>
        <end position="59"/>
    </location>
</feature>
<evidence type="ECO:0000250" key="1"/>
<evidence type="ECO:0000255" key="2"/>
<evidence type="ECO:0000305" key="3"/>
<protein>
    <recommendedName>
        <fullName>Beta-defensin 39</fullName>
        <shortName>BD-39</shortName>
    </recommendedName>
    <alternativeName>
        <fullName>Defensin, beta 39</fullName>
    </alternativeName>
</protein>
<sequence>MKISCFLLLVLSLSCFQINSVSGIDSVKCFQKNNTCHTIRCPYFQDEVGTCYEGRGKCCQKRLLSIRVPKKKV</sequence>
<accession>Q32ZF7</accession>
<keyword id="KW-0044">Antibiotic</keyword>
<keyword id="KW-0929">Antimicrobial</keyword>
<keyword id="KW-0211">Defensin</keyword>
<keyword id="KW-1015">Disulfide bond</keyword>
<keyword id="KW-1185">Reference proteome</keyword>
<keyword id="KW-0964">Secreted</keyword>
<keyword id="KW-0732">Signal</keyword>
<organism>
    <name type="scientific">Rattus norvegicus</name>
    <name type="common">Rat</name>
    <dbReference type="NCBI Taxonomy" id="10116"/>
    <lineage>
        <taxon>Eukaryota</taxon>
        <taxon>Metazoa</taxon>
        <taxon>Chordata</taxon>
        <taxon>Craniata</taxon>
        <taxon>Vertebrata</taxon>
        <taxon>Euteleostomi</taxon>
        <taxon>Mammalia</taxon>
        <taxon>Eutheria</taxon>
        <taxon>Euarchontoglires</taxon>
        <taxon>Glires</taxon>
        <taxon>Rodentia</taxon>
        <taxon>Myomorpha</taxon>
        <taxon>Muroidea</taxon>
        <taxon>Muridae</taxon>
        <taxon>Murinae</taxon>
        <taxon>Rattus</taxon>
    </lineage>
</organism>
<dbReference type="EMBL" id="AY621366">
    <property type="protein sequence ID" value="AAT51905.1"/>
    <property type="molecule type" value="mRNA"/>
</dbReference>
<dbReference type="RefSeq" id="NP_001032611.1">
    <property type="nucleotide sequence ID" value="NM_001037522.1"/>
</dbReference>
<dbReference type="SMR" id="Q32ZF7"/>
<dbReference type="FunCoup" id="Q32ZF7">
    <property type="interactions" value="15"/>
</dbReference>
<dbReference type="STRING" id="10116.ENSRNOP00000039757"/>
<dbReference type="PaxDb" id="10116-ENSRNOP00000039757"/>
<dbReference type="Ensembl" id="ENSRNOT00000040406.3">
    <property type="protein sequence ID" value="ENSRNOP00000039757.2"/>
    <property type="gene ID" value="ENSRNOG00000034275.3"/>
</dbReference>
<dbReference type="GeneID" id="641646"/>
<dbReference type="KEGG" id="rno:641646"/>
<dbReference type="UCSC" id="RGD:1563816">
    <property type="organism name" value="rat"/>
</dbReference>
<dbReference type="AGR" id="RGD:1563816"/>
<dbReference type="CTD" id="360214"/>
<dbReference type="RGD" id="1563816">
    <property type="gene designation" value="Defb39"/>
</dbReference>
<dbReference type="GeneTree" id="ENSGT01110000267485"/>
<dbReference type="HOGENOM" id="CLU_189296_5_1_1"/>
<dbReference type="InParanoid" id="Q32ZF7"/>
<dbReference type="OMA" id="NTCHTNQ"/>
<dbReference type="OrthoDB" id="9622366at2759"/>
<dbReference type="PhylomeDB" id="Q32ZF7"/>
<dbReference type="PRO" id="PR:Q32ZF7"/>
<dbReference type="Proteomes" id="UP000002494">
    <property type="component" value="Chromosome 16"/>
</dbReference>
<dbReference type="Bgee" id="ENSRNOG00000034275">
    <property type="expression patterns" value="Expressed in stomach and 2 other cell types or tissues"/>
</dbReference>
<dbReference type="GO" id="GO:0005615">
    <property type="term" value="C:extracellular space"/>
    <property type="evidence" value="ECO:0000318"/>
    <property type="project" value="GO_Central"/>
</dbReference>
<dbReference type="GO" id="GO:0031731">
    <property type="term" value="F:CCR6 chemokine receptor binding"/>
    <property type="evidence" value="ECO:0000318"/>
    <property type="project" value="GO_Central"/>
</dbReference>
<dbReference type="GO" id="GO:0050829">
    <property type="term" value="P:defense response to Gram-negative bacterium"/>
    <property type="evidence" value="ECO:0000318"/>
    <property type="project" value="GO_Central"/>
</dbReference>
<dbReference type="GO" id="GO:0050830">
    <property type="term" value="P:defense response to Gram-positive bacterium"/>
    <property type="evidence" value="ECO:0000318"/>
    <property type="project" value="GO_Central"/>
</dbReference>
<dbReference type="GO" id="GO:0002227">
    <property type="term" value="P:innate immune response in mucosa"/>
    <property type="evidence" value="ECO:0000318"/>
    <property type="project" value="GO_Central"/>
</dbReference>
<dbReference type="Gene3D" id="3.10.360.10">
    <property type="entry name" value="Antimicrobial Peptide, Beta-defensin 2, Chain A"/>
    <property type="match status" value="1"/>
</dbReference>
<dbReference type="InterPro" id="IPR001855">
    <property type="entry name" value="Defensin_beta-like"/>
</dbReference>
<dbReference type="PANTHER" id="PTHR21388:SF6">
    <property type="entry name" value="BETA-DEFENSIN 39"/>
    <property type="match status" value="1"/>
</dbReference>
<dbReference type="PANTHER" id="PTHR21388">
    <property type="entry name" value="BETA-DEFENSIN-RELATED"/>
    <property type="match status" value="1"/>
</dbReference>
<dbReference type="Pfam" id="PF00711">
    <property type="entry name" value="Defensin_beta"/>
    <property type="match status" value="1"/>
</dbReference>
<dbReference type="SUPFAM" id="SSF57392">
    <property type="entry name" value="Defensin-like"/>
    <property type="match status" value="1"/>
</dbReference>